<gene>
    <name evidence="6" type="primary">ELO5</name>
    <name evidence="8" type="ORF">LMJF_05_1170</name>
</gene>
<comment type="function">
    <text evidence="5">Involved in the synthesis of fatty acids (PubMed:17222186). Elongates C20 polyunsaturated fatty acids (PUFAs) with a preference for n-6 PUFAs (PubMed:17222186).</text>
</comment>
<comment type="catalytic activity">
    <reaction evidence="2">
        <text>an acyl-CoA + malonyl-CoA + H(+) = a 3-oxoacyl-CoA + CO2 + CoA</text>
        <dbReference type="Rhea" id="RHEA:50252"/>
        <dbReference type="ChEBI" id="CHEBI:15378"/>
        <dbReference type="ChEBI" id="CHEBI:16526"/>
        <dbReference type="ChEBI" id="CHEBI:57287"/>
        <dbReference type="ChEBI" id="CHEBI:57384"/>
        <dbReference type="ChEBI" id="CHEBI:58342"/>
        <dbReference type="ChEBI" id="CHEBI:90726"/>
    </reaction>
    <physiologicalReaction direction="left-to-right" evidence="2">
        <dbReference type="Rhea" id="RHEA:50253"/>
    </physiologicalReaction>
</comment>
<comment type="pathway">
    <text evidence="7">Lipid metabolism; polyunsaturated fatty acid biosynthesis.</text>
</comment>
<comment type="subcellular location">
    <subcellularLocation>
        <location evidence="3">Membrane</location>
        <topology evidence="3">Multi-pass membrane protein</topology>
    </subcellularLocation>
</comment>
<comment type="similarity">
    <text evidence="4">Belongs to the ELO family.</text>
</comment>
<name>ELO5_LEIMA</name>
<feature type="chain" id="PRO_0000459366" description="Fatty acid elongase 5">
    <location>
        <begin position="1"/>
        <end position="249"/>
    </location>
</feature>
<feature type="transmembrane region" description="Helical" evidence="3">
    <location>
        <begin position="23"/>
        <end position="43"/>
    </location>
</feature>
<feature type="transmembrane region" description="Helical" evidence="3">
    <location>
        <begin position="68"/>
        <end position="88"/>
    </location>
</feature>
<feature type="transmembrane region" description="Helical" evidence="3">
    <location>
        <begin position="100"/>
        <end position="120"/>
    </location>
</feature>
<feature type="transmembrane region" description="Helical" evidence="3">
    <location>
        <begin position="138"/>
        <end position="158"/>
    </location>
</feature>
<feature type="transmembrane region" description="Helical" evidence="3">
    <location>
        <begin position="159"/>
        <end position="179"/>
    </location>
</feature>
<feature type="transmembrane region" description="Helical" evidence="3">
    <location>
        <begin position="193"/>
        <end position="213"/>
    </location>
</feature>
<feature type="transmembrane region" description="Helical" evidence="3">
    <location>
        <begin position="217"/>
        <end position="236"/>
    </location>
</feature>
<feature type="short sequence motif" description="HxxHH motif" evidence="6">
    <location>
        <begin position="131"/>
        <end position="135"/>
    </location>
</feature>
<feature type="active site" description="Nucleophile" evidence="1">
    <location>
        <position position="134"/>
    </location>
</feature>
<sequence>MKFADAMQCIGKESLCFHPELNVFVNYPVLIGCHIGYLVVIVLLYKFMKGRTAYVLKYPMMLYNTAQVALSLVMAINLGQFLVYGVFNLNGGFTGTIEYWIFVHYATKFLDMFDTYFIVLRKKEEQLSFLHIYHHVTIGFIWGLLLHHGVANGTAFFGAWINSAVHALMYFHYLYTSLGYTNPLKTYLTQLQMIQFALCILHAVLAVVAHSPIPKKWAVLQLCYHLTLLYLFMRFYRKGMRKLKRKAKV</sequence>
<accession>Q4QJ85</accession>
<dbReference type="EC" id="2.3.1.-" evidence="2"/>
<dbReference type="EMBL" id="FR796401">
    <property type="protein sequence ID" value="CAJ02037.1"/>
    <property type="molecule type" value="Genomic_DNA"/>
</dbReference>
<dbReference type="RefSeq" id="XP_001687594.1">
    <property type="nucleotide sequence ID" value="XM_001687542.1"/>
</dbReference>
<dbReference type="SMR" id="Q4QJ85"/>
<dbReference type="STRING" id="5664.Q4QJ85"/>
<dbReference type="EnsemblProtists" id="CAJ02037">
    <property type="protein sequence ID" value="CAJ02037"/>
    <property type="gene ID" value="LMJF_05_1170"/>
</dbReference>
<dbReference type="GeneID" id="5648982"/>
<dbReference type="KEGG" id="lma:LMJF_05_1170"/>
<dbReference type="VEuPathDB" id="TriTrypDB:LmjF.05.1170"/>
<dbReference type="VEuPathDB" id="TriTrypDB:LMJFC_050018500"/>
<dbReference type="VEuPathDB" id="TriTrypDB:LMJLV39_050017000"/>
<dbReference type="VEuPathDB" id="TriTrypDB:LMJSD75_050017200"/>
<dbReference type="eggNOG" id="KOG3071">
    <property type="taxonomic scope" value="Eukaryota"/>
</dbReference>
<dbReference type="HOGENOM" id="CLU_048483_0_2_1"/>
<dbReference type="InParanoid" id="Q4QJ85"/>
<dbReference type="OMA" id="AMEVVTH"/>
<dbReference type="UniPathway" id="UPA00658"/>
<dbReference type="Proteomes" id="UP000000542">
    <property type="component" value="Chromosome 5"/>
</dbReference>
<dbReference type="GO" id="GO:0005789">
    <property type="term" value="C:endoplasmic reticulum membrane"/>
    <property type="evidence" value="ECO:0000318"/>
    <property type="project" value="GO_Central"/>
</dbReference>
<dbReference type="GO" id="GO:0009922">
    <property type="term" value="F:fatty acid elongase activity"/>
    <property type="evidence" value="ECO:0000266"/>
    <property type="project" value="GeneDB"/>
</dbReference>
<dbReference type="GO" id="GO:0034625">
    <property type="term" value="P:fatty acid elongation, monounsaturated fatty acid"/>
    <property type="evidence" value="ECO:0000318"/>
    <property type="project" value="GO_Central"/>
</dbReference>
<dbReference type="GO" id="GO:0034626">
    <property type="term" value="P:fatty acid elongation, polyunsaturated fatty acid"/>
    <property type="evidence" value="ECO:0000318"/>
    <property type="project" value="GO_Central"/>
</dbReference>
<dbReference type="GO" id="GO:0019367">
    <property type="term" value="P:fatty acid elongation, saturated fatty acid"/>
    <property type="evidence" value="ECO:0000318"/>
    <property type="project" value="GO_Central"/>
</dbReference>
<dbReference type="GO" id="GO:0042759">
    <property type="term" value="P:long-chain fatty acid biosynthetic process"/>
    <property type="evidence" value="ECO:0000266"/>
    <property type="project" value="GeneDB"/>
</dbReference>
<dbReference type="GO" id="GO:0030148">
    <property type="term" value="P:sphingolipid biosynthetic process"/>
    <property type="evidence" value="ECO:0000318"/>
    <property type="project" value="GO_Central"/>
</dbReference>
<dbReference type="GO" id="GO:0006636">
    <property type="term" value="P:unsaturated fatty acid biosynthetic process"/>
    <property type="evidence" value="ECO:0007669"/>
    <property type="project" value="UniProtKB-UniPathway"/>
</dbReference>
<dbReference type="GO" id="GO:0042761">
    <property type="term" value="P:very long-chain fatty acid biosynthetic process"/>
    <property type="evidence" value="ECO:0000318"/>
    <property type="project" value="GO_Central"/>
</dbReference>
<dbReference type="InterPro" id="IPR002076">
    <property type="entry name" value="ELO_fam"/>
</dbReference>
<dbReference type="PANTHER" id="PTHR11157:SF133">
    <property type="entry name" value="ELONGATION OF FATTY ACIDS PROTEIN"/>
    <property type="match status" value="1"/>
</dbReference>
<dbReference type="PANTHER" id="PTHR11157">
    <property type="entry name" value="FATTY ACID ACYL TRANSFERASE-RELATED"/>
    <property type="match status" value="1"/>
</dbReference>
<dbReference type="Pfam" id="PF01151">
    <property type="entry name" value="ELO"/>
    <property type="match status" value="1"/>
</dbReference>
<dbReference type="PROSITE" id="PS51257">
    <property type="entry name" value="PROKAR_LIPOPROTEIN"/>
    <property type="match status" value="1"/>
</dbReference>
<reference evidence="9" key="1">
    <citation type="journal article" date="2005" name="Science">
        <title>The genome of the kinetoplastid parasite, Leishmania major.</title>
        <authorList>
            <person name="Ivens A.C."/>
            <person name="Peacock C.S."/>
            <person name="Worthey E.A."/>
            <person name="Murphy L."/>
            <person name="Aggarwal G."/>
            <person name="Berriman M."/>
            <person name="Sisk E."/>
            <person name="Rajandream M.A."/>
            <person name="Adlem E."/>
            <person name="Aert R."/>
            <person name="Anupama A."/>
            <person name="Apostolou Z."/>
            <person name="Attipoe P."/>
            <person name="Bason N."/>
            <person name="Bauser C."/>
            <person name="Beck A."/>
            <person name="Beverley S.M."/>
            <person name="Bianchettin G."/>
            <person name="Borzym K."/>
            <person name="Bothe G."/>
            <person name="Bruschi C.V."/>
            <person name="Collins M."/>
            <person name="Cadag E."/>
            <person name="Ciarloni L."/>
            <person name="Clayton C."/>
            <person name="Coulson R.M.R."/>
            <person name="Cronin A."/>
            <person name="Cruz A.K."/>
            <person name="Davies R.M."/>
            <person name="De Gaudenzi J."/>
            <person name="Dobson D.E."/>
            <person name="Duesterhoeft A."/>
            <person name="Fazelina G."/>
            <person name="Fosker N."/>
            <person name="Frasch A.C."/>
            <person name="Fraser A."/>
            <person name="Fuchs M."/>
            <person name="Gabel C."/>
            <person name="Goble A."/>
            <person name="Goffeau A."/>
            <person name="Harris D."/>
            <person name="Hertz-Fowler C."/>
            <person name="Hilbert H."/>
            <person name="Horn D."/>
            <person name="Huang Y."/>
            <person name="Klages S."/>
            <person name="Knights A."/>
            <person name="Kube M."/>
            <person name="Larke N."/>
            <person name="Litvin L."/>
            <person name="Lord A."/>
            <person name="Louie T."/>
            <person name="Marra M."/>
            <person name="Masuy D."/>
            <person name="Matthews K."/>
            <person name="Michaeli S."/>
            <person name="Mottram J.C."/>
            <person name="Mueller-Auer S."/>
            <person name="Munden H."/>
            <person name="Nelson S."/>
            <person name="Norbertczak H."/>
            <person name="Oliver K."/>
            <person name="O'neil S."/>
            <person name="Pentony M."/>
            <person name="Pohl T.M."/>
            <person name="Price C."/>
            <person name="Purnelle B."/>
            <person name="Quail M.A."/>
            <person name="Rabbinowitsch E."/>
            <person name="Reinhardt R."/>
            <person name="Rieger M."/>
            <person name="Rinta J."/>
            <person name="Robben J."/>
            <person name="Robertson L."/>
            <person name="Ruiz J.C."/>
            <person name="Rutter S."/>
            <person name="Saunders D."/>
            <person name="Schaefer M."/>
            <person name="Schein J."/>
            <person name="Schwartz D.C."/>
            <person name="Seeger K."/>
            <person name="Seyler A."/>
            <person name="Sharp S."/>
            <person name="Shin H."/>
            <person name="Sivam D."/>
            <person name="Squares R."/>
            <person name="Squares S."/>
            <person name="Tosato V."/>
            <person name="Vogt C."/>
            <person name="Volckaert G."/>
            <person name="Wambutt R."/>
            <person name="Warren T."/>
            <person name="Wedler H."/>
            <person name="Woodward J."/>
            <person name="Zhou S."/>
            <person name="Zimmermann W."/>
            <person name="Smith D.F."/>
            <person name="Blackwell J.M."/>
            <person name="Stuart K.D."/>
            <person name="Barrell B.G."/>
            <person name="Myler P.J."/>
        </authorList>
    </citation>
    <scope>NUCLEOTIDE SEQUENCE [LARGE SCALE GENOMIC DNA]</scope>
    <source>
        <strain evidence="9">MHOM/IL/81/Friedlin</strain>
    </source>
</reference>
<reference evidence="9" key="2">
    <citation type="journal article" date="2011" name="Genome Res.">
        <title>Chromosome and gene copy number variation allow major structural change between species and strains of Leishmania.</title>
        <authorList>
            <person name="Rogers M.B."/>
            <person name="Hilley J.D."/>
            <person name="Dickens N.J."/>
            <person name="Wilkes J."/>
            <person name="Bates P.A."/>
            <person name="Depledge D.P."/>
            <person name="Harris D."/>
            <person name="Her Y."/>
            <person name="Herzyk P."/>
            <person name="Imamura H."/>
            <person name="Otto T.D."/>
            <person name="Sanders M."/>
            <person name="Seeger K."/>
            <person name="Dujardin J.C."/>
            <person name="Berriman M."/>
            <person name="Smith D.F."/>
            <person name="Hertz-Fowler C."/>
            <person name="Mottram J.C."/>
        </authorList>
    </citation>
    <scope>NUCLEOTIDE SEQUENCE [LARGE SCALE GENOMIC DNA]</scope>
    <source>
        <strain evidence="9">MHOM/IL/81/Friedlin</strain>
    </source>
</reference>
<reference evidence="7" key="3">
    <citation type="journal article" date="2007" name="FEBS J.">
        <title>Elongation of polyunsaturated fatty acids in trypanosomatids.</title>
        <authorList>
            <person name="Livore V.I."/>
            <person name="Tripodi K.E."/>
            <person name="Uttaro A.D."/>
        </authorList>
    </citation>
    <scope>FUNCTION</scope>
    <scope>SUBSTRATE SPECIFICITY</scope>
</reference>
<protein>
    <recommendedName>
        <fullName evidence="6">Fatty acid elongase 5</fullName>
        <ecNumber evidence="2">2.3.1.-</ecNumber>
    </recommendedName>
    <alternativeName>
        <fullName evidence="4">Elongation of fatty acids protein</fullName>
    </alternativeName>
    <alternativeName>
        <fullName evidence="6">PUFA Delta5 elongase</fullName>
    </alternativeName>
</protein>
<evidence type="ECO:0000250" key="1">
    <source>
        <dbReference type="UniProtKB" id="A1L3X0"/>
    </source>
</evidence>
<evidence type="ECO:0000250" key="2">
    <source>
        <dbReference type="UniProtKB" id="Q57X51"/>
    </source>
</evidence>
<evidence type="ECO:0000255" key="3"/>
<evidence type="ECO:0000255" key="4">
    <source>
        <dbReference type="RuleBase" id="RU361115"/>
    </source>
</evidence>
<evidence type="ECO:0000269" key="5">
    <source>
    </source>
</evidence>
<evidence type="ECO:0000303" key="6">
    <source>
    </source>
</evidence>
<evidence type="ECO:0000305" key="7"/>
<evidence type="ECO:0000312" key="8">
    <source>
        <dbReference type="EMBL" id="CAJ02037.1"/>
    </source>
</evidence>
<evidence type="ECO:0000312" key="9">
    <source>
        <dbReference type="Proteomes" id="UP000000542"/>
    </source>
</evidence>
<keyword id="KW-0275">Fatty acid biosynthesis</keyword>
<keyword id="KW-0276">Fatty acid metabolism</keyword>
<keyword id="KW-0444">Lipid biosynthesis</keyword>
<keyword id="KW-0443">Lipid metabolism</keyword>
<keyword id="KW-0472">Membrane</keyword>
<keyword id="KW-1185">Reference proteome</keyword>
<keyword id="KW-0808">Transferase</keyword>
<keyword id="KW-0812">Transmembrane</keyword>
<keyword id="KW-1133">Transmembrane helix</keyword>
<proteinExistence type="inferred from homology"/>
<organism evidence="9">
    <name type="scientific">Leishmania major</name>
    <dbReference type="NCBI Taxonomy" id="5664"/>
    <lineage>
        <taxon>Eukaryota</taxon>
        <taxon>Discoba</taxon>
        <taxon>Euglenozoa</taxon>
        <taxon>Kinetoplastea</taxon>
        <taxon>Metakinetoplastina</taxon>
        <taxon>Trypanosomatida</taxon>
        <taxon>Trypanosomatidae</taxon>
        <taxon>Leishmaniinae</taxon>
        <taxon>Leishmania</taxon>
    </lineage>
</organism>